<gene>
    <name evidence="1" type="primary">upp</name>
    <name type="ordered locus">BMEA_B1054</name>
</gene>
<comment type="function">
    <text evidence="1">Catalyzes the conversion of uracil and 5-phospho-alpha-D-ribose 1-diphosphate (PRPP) to UMP and diphosphate.</text>
</comment>
<comment type="catalytic activity">
    <reaction evidence="1">
        <text>UMP + diphosphate = 5-phospho-alpha-D-ribose 1-diphosphate + uracil</text>
        <dbReference type="Rhea" id="RHEA:13017"/>
        <dbReference type="ChEBI" id="CHEBI:17568"/>
        <dbReference type="ChEBI" id="CHEBI:33019"/>
        <dbReference type="ChEBI" id="CHEBI:57865"/>
        <dbReference type="ChEBI" id="CHEBI:58017"/>
        <dbReference type="EC" id="2.4.2.9"/>
    </reaction>
</comment>
<comment type="cofactor">
    <cofactor evidence="1">
        <name>Mg(2+)</name>
        <dbReference type="ChEBI" id="CHEBI:18420"/>
    </cofactor>
    <text evidence="1">Binds 1 Mg(2+) ion per subunit. The magnesium is bound as Mg-PRPP.</text>
</comment>
<comment type="activity regulation">
    <text evidence="1">Allosterically activated by GTP.</text>
</comment>
<comment type="pathway">
    <text evidence="1">Pyrimidine metabolism; UMP biosynthesis via salvage pathway; UMP from uracil: step 1/1.</text>
</comment>
<comment type="similarity">
    <text evidence="1">Belongs to the UPRTase family.</text>
</comment>
<protein>
    <recommendedName>
        <fullName evidence="1">Uracil phosphoribosyltransferase</fullName>
        <ecNumber evidence="1">2.4.2.9</ecNumber>
    </recommendedName>
    <alternativeName>
        <fullName evidence="1">UMP pyrophosphorylase</fullName>
    </alternativeName>
    <alternativeName>
        <fullName evidence="1">UPRTase</fullName>
    </alternativeName>
</protein>
<dbReference type="EC" id="2.4.2.9" evidence="1"/>
<dbReference type="EMBL" id="CP001489">
    <property type="protein sequence ID" value="ACO02837.1"/>
    <property type="molecule type" value="Genomic_DNA"/>
</dbReference>
<dbReference type="RefSeq" id="WP_002965587.1">
    <property type="nucleotide sequence ID" value="NC_012442.1"/>
</dbReference>
<dbReference type="SMR" id="C0RMK4"/>
<dbReference type="GeneID" id="29595416"/>
<dbReference type="KEGG" id="bmi:BMEA_B1054"/>
<dbReference type="HOGENOM" id="CLU_067096_2_2_5"/>
<dbReference type="UniPathway" id="UPA00574">
    <property type="reaction ID" value="UER00636"/>
</dbReference>
<dbReference type="Proteomes" id="UP000001748">
    <property type="component" value="Chromosome II"/>
</dbReference>
<dbReference type="GO" id="GO:0005525">
    <property type="term" value="F:GTP binding"/>
    <property type="evidence" value="ECO:0007669"/>
    <property type="project" value="UniProtKB-KW"/>
</dbReference>
<dbReference type="GO" id="GO:0000287">
    <property type="term" value="F:magnesium ion binding"/>
    <property type="evidence" value="ECO:0007669"/>
    <property type="project" value="UniProtKB-UniRule"/>
</dbReference>
<dbReference type="GO" id="GO:0004845">
    <property type="term" value="F:uracil phosphoribosyltransferase activity"/>
    <property type="evidence" value="ECO:0007669"/>
    <property type="project" value="UniProtKB-UniRule"/>
</dbReference>
<dbReference type="GO" id="GO:0044206">
    <property type="term" value="P:UMP salvage"/>
    <property type="evidence" value="ECO:0007669"/>
    <property type="project" value="UniProtKB-UniRule"/>
</dbReference>
<dbReference type="GO" id="GO:0006223">
    <property type="term" value="P:uracil salvage"/>
    <property type="evidence" value="ECO:0007669"/>
    <property type="project" value="InterPro"/>
</dbReference>
<dbReference type="CDD" id="cd06223">
    <property type="entry name" value="PRTases_typeI"/>
    <property type="match status" value="1"/>
</dbReference>
<dbReference type="FunFam" id="3.40.50.2020:FF:000003">
    <property type="entry name" value="Uracil phosphoribosyltransferase"/>
    <property type="match status" value="1"/>
</dbReference>
<dbReference type="Gene3D" id="3.40.50.2020">
    <property type="match status" value="1"/>
</dbReference>
<dbReference type="HAMAP" id="MF_01218_B">
    <property type="entry name" value="Upp_B"/>
    <property type="match status" value="1"/>
</dbReference>
<dbReference type="InterPro" id="IPR000836">
    <property type="entry name" value="PRibTrfase_dom"/>
</dbReference>
<dbReference type="InterPro" id="IPR029057">
    <property type="entry name" value="PRTase-like"/>
</dbReference>
<dbReference type="InterPro" id="IPR034332">
    <property type="entry name" value="Upp_B"/>
</dbReference>
<dbReference type="InterPro" id="IPR050054">
    <property type="entry name" value="UPRTase/APRTase"/>
</dbReference>
<dbReference type="InterPro" id="IPR005765">
    <property type="entry name" value="Ura_phspho_trans"/>
</dbReference>
<dbReference type="NCBIfam" id="NF001097">
    <property type="entry name" value="PRK00129.1"/>
    <property type="match status" value="1"/>
</dbReference>
<dbReference type="NCBIfam" id="TIGR01091">
    <property type="entry name" value="upp"/>
    <property type="match status" value="1"/>
</dbReference>
<dbReference type="PANTHER" id="PTHR32315">
    <property type="entry name" value="ADENINE PHOSPHORIBOSYLTRANSFERASE"/>
    <property type="match status" value="1"/>
</dbReference>
<dbReference type="PANTHER" id="PTHR32315:SF4">
    <property type="entry name" value="URACIL PHOSPHORIBOSYLTRANSFERASE, CHLOROPLASTIC"/>
    <property type="match status" value="1"/>
</dbReference>
<dbReference type="Pfam" id="PF14681">
    <property type="entry name" value="UPRTase"/>
    <property type="match status" value="1"/>
</dbReference>
<dbReference type="SUPFAM" id="SSF53271">
    <property type="entry name" value="PRTase-like"/>
    <property type="match status" value="1"/>
</dbReference>
<accession>C0RMK4</accession>
<reference key="1">
    <citation type="submission" date="2009-03" db="EMBL/GenBank/DDBJ databases">
        <title>Brucella melitensis ATCC 23457 whole genome shotgun sequencing project.</title>
        <authorList>
            <person name="Setubal J.C."/>
            <person name="Boyle S."/>
            <person name="Crasta O.R."/>
            <person name="Gillespie J.J."/>
            <person name="Kenyon R.W."/>
            <person name="Lu J."/>
            <person name="Mane S."/>
            <person name="Nagrani S."/>
            <person name="Shallom J.M."/>
            <person name="Shallom S."/>
            <person name="Shukla M."/>
            <person name="Snyder E.E."/>
            <person name="Sobral B.W."/>
            <person name="Wattam A.R."/>
            <person name="Will R."/>
            <person name="Williams K."/>
            <person name="Yoo H."/>
            <person name="Munk C."/>
            <person name="Tapia R."/>
            <person name="Han C."/>
            <person name="Detter J.C."/>
            <person name="Bruce D."/>
            <person name="Brettin T.S."/>
        </authorList>
    </citation>
    <scope>NUCLEOTIDE SEQUENCE [LARGE SCALE GENOMIC DNA]</scope>
    <source>
        <strain>ATCC 23457</strain>
    </source>
</reference>
<sequence>MGVTVVSHPLVQHKLTIMRKKETSTASFRRLLKEISLLLCYEVTRNLELTTMSIETPLMPMEAPVLEGKKLVFASILRAGNGLLEGMLDLVPAARVAHIGLYRDHDTLQPIEYYFKAPEDIVNRLVIVVDPMLATANSAIAAIDKLKERGATNIRFLCLLAAPEGIERFTKAHPDVEVFTASIDECLDEKGYIVPGLGDAGDRMYGTK</sequence>
<keyword id="KW-0021">Allosteric enzyme</keyword>
<keyword id="KW-0328">Glycosyltransferase</keyword>
<keyword id="KW-0342">GTP-binding</keyword>
<keyword id="KW-0460">Magnesium</keyword>
<keyword id="KW-0547">Nucleotide-binding</keyword>
<keyword id="KW-0808">Transferase</keyword>
<evidence type="ECO:0000255" key="1">
    <source>
        <dbReference type="HAMAP-Rule" id="MF_01218"/>
    </source>
</evidence>
<feature type="chain" id="PRO_1000164814" description="Uracil phosphoribosyltransferase">
    <location>
        <begin position="1"/>
        <end position="208"/>
    </location>
</feature>
<feature type="binding site" evidence="1">
    <location>
        <position position="78"/>
    </location>
    <ligand>
        <name>5-phospho-alpha-D-ribose 1-diphosphate</name>
        <dbReference type="ChEBI" id="CHEBI:58017"/>
    </ligand>
</feature>
<feature type="binding site" evidence="1">
    <location>
        <position position="103"/>
    </location>
    <ligand>
        <name>5-phospho-alpha-D-ribose 1-diphosphate</name>
        <dbReference type="ChEBI" id="CHEBI:58017"/>
    </ligand>
</feature>
<feature type="binding site" evidence="1">
    <location>
        <begin position="130"/>
        <end position="138"/>
    </location>
    <ligand>
        <name>5-phospho-alpha-D-ribose 1-diphosphate</name>
        <dbReference type="ChEBI" id="CHEBI:58017"/>
    </ligand>
</feature>
<feature type="binding site" evidence="1">
    <location>
        <position position="193"/>
    </location>
    <ligand>
        <name>uracil</name>
        <dbReference type="ChEBI" id="CHEBI:17568"/>
    </ligand>
</feature>
<feature type="binding site" evidence="1">
    <location>
        <begin position="198"/>
        <end position="200"/>
    </location>
    <ligand>
        <name>uracil</name>
        <dbReference type="ChEBI" id="CHEBI:17568"/>
    </ligand>
</feature>
<feature type="binding site" evidence="1">
    <location>
        <position position="199"/>
    </location>
    <ligand>
        <name>5-phospho-alpha-D-ribose 1-diphosphate</name>
        <dbReference type="ChEBI" id="CHEBI:58017"/>
    </ligand>
</feature>
<organism>
    <name type="scientific">Brucella melitensis biotype 2 (strain ATCC 23457)</name>
    <dbReference type="NCBI Taxonomy" id="546272"/>
    <lineage>
        <taxon>Bacteria</taxon>
        <taxon>Pseudomonadati</taxon>
        <taxon>Pseudomonadota</taxon>
        <taxon>Alphaproteobacteria</taxon>
        <taxon>Hyphomicrobiales</taxon>
        <taxon>Brucellaceae</taxon>
        <taxon>Brucella/Ochrobactrum group</taxon>
        <taxon>Brucella</taxon>
    </lineage>
</organism>
<proteinExistence type="inferred from homology"/>
<name>UPP_BRUMB</name>